<gene>
    <name evidence="1" type="primary">pdxH</name>
    <name type="ordered locus">BAB1_0444</name>
</gene>
<organism>
    <name type="scientific">Brucella abortus (strain 2308)</name>
    <dbReference type="NCBI Taxonomy" id="359391"/>
    <lineage>
        <taxon>Bacteria</taxon>
        <taxon>Pseudomonadati</taxon>
        <taxon>Pseudomonadota</taxon>
        <taxon>Alphaproteobacteria</taxon>
        <taxon>Hyphomicrobiales</taxon>
        <taxon>Brucellaceae</taxon>
        <taxon>Brucella/Ochrobactrum group</taxon>
        <taxon>Brucella</taxon>
    </lineage>
</organism>
<accession>Q2YMD1</accession>
<proteinExistence type="inferred from homology"/>
<protein>
    <recommendedName>
        <fullName evidence="1">Pyridoxine/pyridoxamine 5'-phosphate oxidase</fullName>
        <ecNumber evidence="1">1.4.3.5</ecNumber>
    </recommendedName>
    <alternativeName>
        <fullName evidence="1">PNP/PMP oxidase</fullName>
        <shortName evidence="1">PNPOx</shortName>
    </alternativeName>
    <alternativeName>
        <fullName evidence="1">Pyridoxal 5'-phosphate synthase</fullName>
    </alternativeName>
</protein>
<evidence type="ECO:0000255" key="1">
    <source>
        <dbReference type="HAMAP-Rule" id="MF_01629"/>
    </source>
</evidence>
<reference key="1">
    <citation type="journal article" date="2005" name="Infect. Immun.">
        <title>Whole-genome analyses of speciation events in pathogenic Brucellae.</title>
        <authorList>
            <person name="Chain P.S."/>
            <person name="Comerci D.J."/>
            <person name="Tolmasky M.E."/>
            <person name="Larimer F.W."/>
            <person name="Malfatti S.A."/>
            <person name="Vergez L.M."/>
            <person name="Aguero F."/>
            <person name="Land M.L."/>
            <person name="Ugalde R.A."/>
            <person name="Garcia E."/>
        </authorList>
    </citation>
    <scope>NUCLEOTIDE SEQUENCE [LARGE SCALE GENOMIC DNA]</scope>
    <source>
        <strain>2308</strain>
    </source>
</reference>
<dbReference type="EC" id="1.4.3.5" evidence="1"/>
<dbReference type="EMBL" id="AM040264">
    <property type="protein sequence ID" value="CAJ10400.1"/>
    <property type="molecule type" value="Genomic_DNA"/>
</dbReference>
<dbReference type="SMR" id="Q2YMD1"/>
<dbReference type="STRING" id="359391.BAB1_0444"/>
<dbReference type="KEGG" id="bmf:BAB1_0444"/>
<dbReference type="HOGENOM" id="CLU_032263_2_3_5"/>
<dbReference type="UniPathway" id="UPA01068">
    <property type="reaction ID" value="UER00304"/>
</dbReference>
<dbReference type="UniPathway" id="UPA01068">
    <property type="reaction ID" value="UER00305"/>
</dbReference>
<dbReference type="Proteomes" id="UP000002719">
    <property type="component" value="Chromosome I"/>
</dbReference>
<dbReference type="GO" id="GO:0010181">
    <property type="term" value="F:FMN binding"/>
    <property type="evidence" value="ECO:0007669"/>
    <property type="project" value="UniProtKB-UniRule"/>
</dbReference>
<dbReference type="GO" id="GO:0004733">
    <property type="term" value="F:pyridoxamine phosphate oxidase activity"/>
    <property type="evidence" value="ECO:0007669"/>
    <property type="project" value="UniProtKB-UniRule"/>
</dbReference>
<dbReference type="GO" id="GO:0008615">
    <property type="term" value="P:pyridoxine biosynthetic process"/>
    <property type="evidence" value="ECO:0007669"/>
    <property type="project" value="UniProtKB-KW"/>
</dbReference>
<dbReference type="Gene3D" id="2.30.110.10">
    <property type="entry name" value="Electron Transport, Fmn-binding Protein, Chain A"/>
    <property type="match status" value="1"/>
</dbReference>
<dbReference type="HAMAP" id="MF_01629">
    <property type="entry name" value="PdxH"/>
    <property type="match status" value="1"/>
</dbReference>
<dbReference type="InterPro" id="IPR000659">
    <property type="entry name" value="Pyridox_Oxase"/>
</dbReference>
<dbReference type="InterPro" id="IPR019740">
    <property type="entry name" value="Pyridox_Oxase_CS"/>
</dbReference>
<dbReference type="InterPro" id="IPR011576">
    <property type="entry name" value="Pyridox_Oxase_N"/>
</dbReference>
<dbReference type="InterPro" id="IPR019576">
    <property type="entry name" value="Pyridoxamine_oxidase_dimer_C"/>
</dbReference>
<dbReference type="InterPro" id="IPR012349">
    <property type="entry name" value="Split_barrel_FMN-bd"/>
</dbReference>
<dbReference type="NCBIfam" id="TIGR00558">
    <property type="entry name" value="pdxH"/>
    <property type="match status" value="1"/>
</dbReference>
<dbReference type="NCBIfam" id="NF004231">
    <property type="entry name" value="PRK05679.1"/>
    <property type="match status" value="1"/>
</dbReference>
<dbReference type="PANTHER" id="PTHR10851:SF0">
    <property type="entry name" value="PYRIDOXINE-5'-PHOSPHATE OXIDASE"/>
    <property type="match status" value="1"/>
</dbReference>
<dbReference type="PANTHER" id="PTHR10851">
    <property type="entry name" value="PYRIDOXINE-5-PHOSPHATE OXIDASE"/>
    <property type="match status" value="1"/>
</dbReference>
<dbReference type="Pfam" id="PF10590">
    <property type="entry name" value="PNP_phzG_C"/>
    <property type="match status" value="1"/>
</dbReference>
<dbReference type="Pfam" id="PF01243">
    <property type="entry name" value="PNPOx_N"/>
    <property type="match status" value="1"/>
</dbReference>
<dbReference type="PIRSF" id="PIRSF000190">
    <property type="entry name" value="Pyd_amn-ph_oxd"/>
    <property type="match status" value="1"/>
</dbReference>
<dbReference type="SUPFAM" id="SSF50475">
    <property type="entry name" value="FMN-binding split barrel"/>
    <property type="match status" value="1"/>
</dbReference>
<dbReference type="PROSITE" id="PS01064">
    <property type="entry name" value="PYRIDOX_OXIDASE"/>
    <property type="match status" value="1"/>
</dbReference>
<comment type="function">
    <text evidence="1">Catalyzes the oxidation of either pyridoxine 5'-phosphate (PNP) or pyridoxamine 5'-phosphate (PMP) into pyridoxal 5'-phosphate (PLP).</text>
</comment>
<comment type="catalytic activity">
    <reaction evidence="1">
        <text>pyridoxamine 5'-phosphate + O2 + H2O = pyridoxal 5'-phosphate + H2O2 + NH4(+)</text>
        <dbReference type="Rhea" id="RHEA:15817"/>
        <dbReference type="ChEBI" id="CHEBI:15377"/>
        <dbReference type="ChEBI" id="CHEBI:15379"/>
        <dbReference type="ChEBI" id="CHEBI:16240"/>
        <dbReference type="ChEBI" id="CHEBI:28938"/>
        <dbReference type="ChEBI" id="CHEBI:58451"/>
        <dbReference type="ChEBI" id="CHEBI:597326"/>
        <dbReference type="EC" id="1.4.3.5"/>
    </reaction>
</comment>
<comment type="catalytic activity">
    <reaction evidence="1">
        <text>pyridoxine 5'-phosphate + O2 = pyridoxal 5'-phosphate + H2O2</text>
        <dbReference type="Rhea" id="RHEA:15149"/>
        <dbReference type="ChEBI" id="CHEBI:15379"/>
        <dbReference type="ChEBI" id="CHEBI:16240"/>
        <dbReference type="ChEBI" id="CHEBI:58589"/>
        <dbReference type="ChEBI" id="CHEBI:597326"/>
        <dbReference type="EC" id="1.4.3.5"/>
    </reaction>
</comment>
<comment type="cofactor">
    <cofactor evidence="1">
        <name>FMN</name>
        <dbReference type="ChEBI" id="CHEBI:58210"/>
    </cofactor>
    <text evidence="1">Binds 1 FMN per subunit.</text>
</comment>
<comment type="pathway">
    <text evidence="1">Cofactor metabolism; pyridoxal 5'-phosphate salvage; pyridoxal 5'-phosphate from pyridoxamine 5'-phosphate: step 1/1.</text>
</comment>
<comment type="pathway">
    <text evidence="1">Cofactor metabolism; pyridoxal 5'-phosphate salvage; pyridoxal 5'-phosphate from pyridoxine 5'-phosphate: step 1/1.</text>
</comment>
<comment type="subunit">
    <text evidence="1">Homodimer.</text>
</comment>
<comment type="similarity">
    <text evidence="1">Belongs to the pyridoxamine 5'-phosphate oxidase family.</text>
</comment>
<keyword id="KW-0285">Flavoprotein</keyword>
<keyword id="KW-0288">FMN</keyword>
<keyword id="KW-0560">Oxidoreductase</keyword>
<keyword id="KW-0664">Pyridoxine biosynthesis</keyword>
<keyword id="KW-1185">Reference proteome</keyword>
<feature type="chain" id="PRO_0000255856" description="Pyridoxine/pyridoxamine 5'-phosphate oxidase">
    <location>
        <begin position="1"/>
        <end position="208"/>
    </location>
</feature>
<feature type="binding site" evidence="1">
    <location>
        <begin position="55"/>
        <end position="60"/>
    </location>
    <ligand>
        <name>FMN</name>
        <dbReference type="ChEBI" id="CHEBI:58210"/>
    </ligand>
</feature>
<feature type="binding site" evidence="1">
    <location>
        <position position="60"/>
    </location>
    <ligand>
        <name>substrate</name>
    </ligand>
</feature>
<feature type="binding site" evidence="1">
    <location>
        <begin position="70"/>
        <end position="71"/>
    </location>
    <ligand>
        <name>FMN</name>
        <dbReference type="ChEBI" id="CHEBI:58210"/>
    </ligand>
</feature>
<feature type="binding site" evidence="1">
    <location>
        <position position="76"/>
    </location>
    <ligand>
        <name>FMN</name>
        <dbReference type="ChEBI" id="CHEBI:58210"/>
    </ligand>
</feature>
<feature type="binding site" evidence="1">
    <location>
        <position position="77"/>
    </location>
    <ligand>
        <name>FMN</name>
        <dbReference type="ChEBI" id="CHEBI:58210"/>
    </ligand>
</feature>
<feature type="binding site" evidence="1">
    <location>
        <position position="99"/>
    </location>
    <ligand>
        <name>FMN</name>
        <dbReference type="ChEBI" id="CHEBI:58210"/>
    </ligand>
</feature>
<feature type="binding site" evidence="1">
    <location>
        <position position="117"/>
    </location>
    <ligand>
        <name>substrate</name>
    </ligand>
</feature>
<feature type="binding site" evidence="1">
    <location>
        <position position="121"/>
    </location>
    <ligand>
        <name>substrate</name>
    </ligand>
</feature>
<feature type="binding site" evidence="1">
    <location>
        <position position="125"/>
    </location>
    <ligand>
        <name>substrate</name>
    </ligand>
</feature>
<feature type="binding site" evidence="1">
    <location>
        <begin position="134"/>
        <end position="135"/>
    </location>
    <ligand>
        <name>FMN</name>
        <dbReference type="ChEBI" id="CHEBI:58210"/>
    </ligand>
</feature>
<feature type="binding site" evidence="1">
    <location>
        <position position="179"/>
    </location>
    <ligand>
        <name>FMN</name>
        <dbReference type="ChEBI" id="CHEBI:58210"/>
    </ligand>
</feature>
<feature type="binding site" evidence="1">
    <location>
        <begin position="185"/>
        <end position="187"/>
    </location>
    <ligand>
        <name>substrate</name>
    </ligand>
</feature>
<feature type="binding site" evidence="1">
    <location>
        <position position="189"/>
    </location>
    <ligand>
        <name>FMN</name>
        <dbReference type="ChEBI" id="CHEBI:58210"/>
    </ligand>
</feature>
<sequence>MEPVKMTNSSDDFTQSAEPFKLFAEWLADAAKSEPNDPNAVALATVDPDGLPNVRMVLLKDFDETGFVFYTNYESKKGQEILSAEKAAMCFHWKSLRRQVRVRGPVEKVSDAEADAYYASRPRGSRIGAWASKQSRPLESRFALEKAVAEYTAKYAIGDIPRPPYWSGFRIRPVSIEFWHDRPFRLHDRVLFTRPTPEGDWNKDRLYP</sequence>
<name>PDXH_BRUA2</name>